<protein>
    <recommendedName>
        <fullName>Tropomyosin beta chain</fullName>
    </recommendedName>
    <alternativeName>
        <fullName>Beta-tropomyosin</fullName>
    </alternativeName>
    <alternativeName>
        <fullName>Tropomyosin-2</fullName>
    </alternativeName>
</protein>
<organism>
    <name type="scientific">Mus musculus</name>
    <name type="common">Mouse</name>
    <dbReference type="NCBI Taxonomy" id="10090"/>
    <lineage>
        <taxon>Eukaryota</taxon>
        <taxon>Metazoa</taxon>
        <taxon>Chordata</taxon>
        <taxon>Craniata</taxon>
        <taxon>Vertebrata</taxon>
        <taxon>Euteleostomi</taxon>
        <taxon>Mammalia</taxon>
        <taxon>Eutheria</taxon>
        <taxon>Euarchontoglires</taxon>
        <taxon>Glires</taxon>
        <taxon>Rodentia</taxon>
        <taxon>Myomorpha</taxon>
        <taxon>Muroidea</taxon>
        <taxon>Muridae</taxon>
        <taxon>Murinae</taxon>
        <taxon>Mus</taxon>
        <taxon>Mus</taxon>
    </lineage>
</organism>
<gene>
    <name type="primary">Tpm2</name>
    <name type="synonym">Tpm-2</name>
</gene>
<evidence type="ECO:0000250" key="1"/>
<evidence type="ECO:0000250" key="2">
    <source>
        <dbReference type="UniProtKB" id="P06753"/>
    </source>
</evidence>
<evidence type="ECO:0000250" key="3">
    <source>
        <dbReference type="UniProtKB" id="P07951"/>
    </source>
</evidence>
<evidence type="ECO:0000250" key="4">
    <source>
        <dbReference type="UniProtKB" id="P58775"/>
    </source>
</evidence>
<evidence type="ECO:0000250" key="5">
    <source>
        <dbReference type="UniProtKB" id="P58776"/>
    </source>
</evidence>
<evidence type="ECO:0000256" key="6">
    <source>
        <dbReference type="SAM" id="MobiDB-lite"/>
    </source>
</evidence>
<evidence type="ECO:0000269" key="7">
    <source>
    </source>
</evidence>
<evidence type="ECO:0000303" key="8">
    <source>
    </source>
</evidence>
<evidence type="ECO:0000305" key="9"/>
<evidence type="ECO:0007744" key="10">
    <source>
    </source>
</evidence>
<dbReference type="EMBL" id="X12650">
    <property type="protein sequence ID" value="CAA31181.1"/>
    <property type="molecule type" value="mRNA"/>
</dbReference>
<dbReference type="EMBL" id="M81086">
    <property type="protein sequence ID" value="AAA40484.1"/>
    <property type="molecule type" value="mRNA"/>
</dbReference>
<dbReference type="EMBL" id="X58381">
    <property type="protein sequence ID" value="CAA41271.1"/>
    <property type="molecule type" value="mRNA"/>
</dbReference>
<dbReference type="CCDS" id="CCDS18100.1">
    <molecule id="P58774-1"/>
</dbReference>
<dbReference type="CCDS" id="CCDS71374.1">
    <molecule id="P58774-2"/>
</dbReference>
<dbReference type="PIR" id="S03838">
    <property type="entry name" value="S03838"/>
</dbReference>
<dbReference type="PIR" id="S23256">
    <property type="entry name" value="S23256"/>
</dbReference>
<dbReference type="RefSeq" id="NP_001264805.1">
    <molecule id="P58774-2"/>
    <property type="nucleotide sequence ID" value="NM_001277876.1"/>
</dbReference>
<dbReference type="RefSeq" id="NP_033442.2">
    <molecule id="P58774-1"/>
    <property type="nucleotide sequence ID" value="NM_009416.4"/>
</dbReference>
<dbReference type="SMR" id="P58774"/>
<dbReference type="BioGRID" id="204292">
    <property type="interactions" value="12"/>
</dbReference>
<dbReference type="DIP" id="DIP-628N"/>
<dbReference type="FunCoup" id="P58774">
    <property type="interactions" value="300"/>
</dbReference>
<dbReference type="IntAct" id="P58774">
    <property type="interactions" value="3"/>
</dbReference>
<dbReference type="STRING" id="10090.ENSMUSP00000103546"/>
<dbReference type="GlyGen" id="P58774">
    <property type="glycosylation" value="1 site, 1 O-linked glycan (1 site)"/>
</dbReference>
<dbReference type="iPTMnet" id="P58774"/>
<dbReference type="PhosphoSitePlus" id="P58774"/>
<dbReference type="jPOST" id="P58774"/>
<dbReference type="PaxDb" id="10090-ENSMUSP00000030184"/>
<dbReference type="PeptideAtlas" id="P58774"/>
<dbReference type="ProteomicsDB" id="259166">
    <molecule id="P58774-1"/>
</dbReference>
<dbReference type="ProteomicsDB" id="259167">
    <molecule id="P58774-2"/>
</dbReference>
<dbReference type="Pumba" id="P58774"/>
<dbReference type="DNASU" id="22004"/>
<dbReference type="Ensembl" id="ENSMUST00000107913.10">
    <molecule id="P58774-1"/>
    <property type="protein sequence ID" value="ENSMUSP00000103546.4"/>
    <property type="gene ID" value="ENSMUSG00000028464.17"/>
</dbReference>
<dbReference type="Ensembl" id="ENSMUST00000107914.10">
    <molecule id="P58774-2"/>
    <property type="protein sequence ID" value="ENSMUSP00000103547.4"/>
    <property type="gene ID" value="ENSMUSG00000028464.17"/>
</dbReference>
<dbReference type="GeneID" id="22004"/>
<dbReference type="KEGG" id="mmu:22004"/>
<dbReference type="UCSC" id="uc008sqd.2">
    <molecule id="P58774-1"/>
    <property type="organism name" value="mouse"/>
</dbReference>
<dbReference type="AGR" id="MGI:98810"/>
<dbReference type="CTD" id="7169"/>
<dbReference type="MGI" id="MGI:98810">
    <property type="gene designation" value="Tpm2"/>
</dbReference>
<dbReference type="VEuPathDB" id="HostDB:ENSMUSG00000028464"/>
<dbReference type="eggNOG" id="KOG1003">
    <property type="taxonomic scope" value="Eukaryota"/>
</dbReference>
<dbReference type="GeneTree" id="ENSGT01030000234542"/>
<dbReference type="HOGENOM" id="CLU_055027_0_0_1"/>
<dbReference type="InParanoid" id="P58774"/>
<dbReference type="OMA" id="FYDADQT"/>
<dbReference type="OrthoDB" id="128924at2759"/>
<dbReference type="PhylomeDB" id="P58774"/>
<dbReference type="Reactome" id="R-MMU-390522">
    <property type="pathway name" value="Striated Muscle Contraction"/>
</dbReference>
<dbReference type="Reactome" id="R-MMU-445355">
    <property type="pathway name" value="Smooth Muscle Contraction"/>
</dbReference>
<dbReference type="BioGRID-ORCS" id="22004">
    <property type="hits" value="1 hit in 78 CRISPR screens"/>
</dbReference>
<dbReference type="ChiTaRS" id="Tpm2">
    <property type="organism name" value="mouse"/>
</dbReference>
<dbReference type="PRO" id="PR:P58774"/>
<dbReference type="Proteomes" id="UP000000589">
    <property type="component" value="Chromosome 4"/>
</dbReference>
<dbReference type="RNAct" id="P58774">
    <property type="molecule type" value="protein"/>
</dbReference>
<dbReference type="Bgee" id="ENSMUSG00000028464">
    <property type="expression patterns" value="Expressed in intercostal muscle and 265 other cell types or tissues"/>
</dbReference>
<dbReference type="ExpressionAtlas" id="P58774">
    <property type="expression patterns" value="baseline and differential"/>
</dbReference>
<dbReference type="GO" id="GO:0015629">
    <property type="term" value="C:actin cytoskeleton"/>
    <property type="evidence" value="ECO:0000250"/>
    <property type="project" value="UniProtKB"/>
</dbReference>
<dbReference type="GO" id="GO:0005862">
    <property type="term" value="C:muscle thin filament tropomyosin"/>
    <property type="evidence" value="ECO:0000304"/>
    <property type="project" value="MGI"/>
</dbReference>
<dbReference type="GO" id="GO:0051015">
    <property type="term" value="F:actin filament binding"/>
    <property type="evidence" value="ECO:0000250"/>
    <property type="project" value="UniProtKB"/>
</dbReference>
<dbReference type="GO" id="GO:0042802">
    <property type="term" value="F:identical protein binding"/>
    <property type="evidence" value="ECO:0000250"/>
    <property type="project" value="UniProtKB"/>
</dbReference>
<dbReference type="GO" id="GO:0046982">
    <property type="term" value="F:protein heterodimerization activity"/>
    <property type="evidence" value="ECO:0000250"/>
    <property type="project" value="UniProtKB"/>
</dbReference>
<dbReference type="GO" id="GO:0042803">
    <property type="term" value="F:protein homodimerization activity"/>
    <property type="evidence" value="ECO:0000250"/>
    <property type="project" value="UniProtKB"/>
</dbReference>
<dbReference type="GO" id="GO:0005200">
    <property type="term" value="F:structural constituent of cytoskeleton"/>
    <property type="evidence" value="ECO:0000304"/>
    <property type="project" value="MGI"/>
</dbReference>
<dbReference type="GO" id="GO:0006936">
    <property type="term" value="P:muscle contraction"/>
    <property type="evidence" value="ECO:0000304"/>
    <property type="project" value="MGI"/>
</dbReference>
<dbReference type="FunFam" id="1.20.5.1160:FF:000013">
    <property type="entry name" value="Tropomyosin 1 (alpha)"/>
    <property type="match status" value="1"/>
</dbReference>
<dbReference type="FunFam" id="1.20.5.170:FF:000005">
    <property type="entry name" value="Tropomyosin alpha-1 chain"/>
    <property type="match status" value="1"/>
</dbReference>
<dbReference type="FunFam" id="1.20.5.170:FF:000001">
    <property type="entry name" value="Tropomyosin alpha-1 chain isoform 1"/>
    <property type="match status" value="1"/>
</dbReference>
<dbReference type="FunFam" id="1.20.5.340:FF:000001">
    <property type="entry name" value="Tropomyosin alpha-1 chain isoform 2"/>
    <property type="match status" value="1"/>
</dbReference>
<dbReference type="Gene3D" id="1.20.5.170">
    <property type="match status" value="2"/>
</dbReference>
<dbReference type="Gene3D" id="1.20.5.340">
    <property type="match status" value="1"/>
</dbReference>
<dbReference type="InterPro" id="IPR000533">
    <property type="entry name" value="Tropomyosin"/>
</dbReference>
<dbReference type="PANTHER" id="PTHR19269">
    <property type="entry name" value="TROPOMYOSIN"/>
    <property type="match status" value="1"/>
</dbReference>
<dbReference type="Pfam" id="PF00261">
    <property type="entry name" value="Tropomyosin"/>
    <property type="match status" value="1"/>
</dbReference>
<dbReference type="PRINTS" id="PR00194">
    <property type="entry name" value="TROPOMYOSIN"/>
</dbReference>
<dbReference type="SUPFAM" id="SSF57997">
    <property type="entry name" value="Tropomyosin"/>
    <property type="match status" value="1"/>
</dbReference>
<dbReference type="PROSITE" id="PS00326">
    <property type="entry name" value="TROPOMYOSIN"/>
    <property type="match status" value="1"/>
</dbReference>
<feature type="chain" id="PRO_0000205628" description="Tropomyosin beta chain">
    <location>
        <begin position="1"/>
        <end position="284"/>
    </location>
</feature>
<feature type="region of interest" description="Disordered" evidence="6">
    <location>
        <begin position="1"/>
        <end position="78"/>
    </location>
</feature>
<feature type="region of interest" description="Disordered" evidence="6">
    <location>
        <begin position="117"/>
        <end position="136"/>
    </location>
</feature>
<feature type="coiled-coil region" evidence="1">
    <location>
        <begin position="1"/>
        <end position="284"/>
    </location>
</feature>
<feature type="compositionally biased region" description="Basic and acidic residues" evidence="6">
    <location>
        <begin position="12"/>
        <end position="40"/>
    </location>
</feature>
<feature type="compositionally biased region" description="Basic and acidic residues" evidence="6">
    <location>
        <begin position="51"/>
        <end position="78"/>
    </location>
</feature>
<feature type="modified residue" description="N-acetylmethionine" evidence="5">
    <location>
        <position position="1"/>
    </location>
</feature>
<feature type="modified residue" description="Phosphothreonine" evidence="3">
    <location>
        <position position="53"/>
    </location>
</feature>
<feature type="modified residue" description="Phosphoserine; by PIK3CG" evidence="7">
    <location>
        <position position="61"/>
    </location>
</feature>
<feature type="modified residue" description="Phosphothreonine" evidence="3">
    <location>
        <position position="79"/>
    </location>
</feature>
<feature type="modified residue" description="Phosphoserine" evidence="2">
    <location>
        <position position="87"/>
    </location>
</feature>
<feature type="modified residue" description="Phosphothreonine" evidence="3">
    <location>
        <position position="108"/>
    </location>
</feature>
<feature type="modified residue" description="Phosphoserine" evidence="3">
    <location>
        <position position="158"/>
    </location>
</feature>
<feature type="modified residue" description="Phosphoserine" evidence="3">
    <location>
        <position position="206"/>
    </location>
</feature>
<feature type="modified residue" description="Phosphoserine" evidence="4">
    <location>
        <position position="215"/>
    </location>
</feature>
<feature type="modified residue" description="Phosphothreonine" evidence="3">
    <location>
        <position position="252"/>
    </location>
</feature>
<feature type="modified residue" description="Phosphotyrosine" evidence="4">
    <location>
        <position position="261"/>
    </location>
</feature>
<feature type="modified residue" description="Phosphoserine" evidence="4">
    <location>
        <position position="271"/>
    </location>
</feature>
<feature type="modified residue" description="Phosphothreonine" evidence="3">
    <location>
        <position position="282"/>
    </location>
</feature>
<feature type="modified residue" description="Phosphoserine" evidence="10">
    <location>
        <position position="283"/>
    </location>
</feature>
<feature type="splice variant" id="VSP_006597" description="In isoform 2." evidence="8">
    <original>KCGDLEEELKIVTNNLKSLEAQADK</original>
    <variation>RARQLEEELRTMDQALKSLIASEEE</variation>
    <location>
        <begin position="189"/>
        <end position="213"/>
    </location>
</feature>
<feature type="splice variant" id="VSP_006598" description="In isoform 2." evidence="8">
    <original>DEVYAQKMKYKAISEELDNALNDITSL</original>
    <variation>ETLASAKEENVEIHQTLDQTLLELNNL</variation>
    <location>
        <begin position="258"/>
        <end position="284"/>
    </location>
</feature>
<feature type="mutagenesis site" description="Abolishes ADRB2 internalization." evidence="7">
    <original>S</original>
    <variation>A</variation>
    <location>
        <position position="61"/>
    </location>
</feature>
<feature type="sequence conflict" description="In Ref. 2; CAA41271." evidence="9" ref="2">
    <original>EQ</original>
    <variation>DE</variation>
    <location>
        <begin position="23"/>
        <end position="24"/>
    </location>
</feature>
<comment type="function">
    <text evidence="4 7">Binds to actin filaments in muscle and non-muscle cells. Plays a central role, in association with the troponin complex, in the calcium dependent regulation of vertebrate striated muscle contraction. Smooth muscle contraction is regulated by interaction with caldesmon. In non-muscle cells is implicated in stabilizing cytoskeleton actin filaments. The non-muscle isoform may have a role in agonist-mediated receptor internalization (PubMed:16094730).</text>
</comment>
<comment type="subunit">
    <text evidence="4">Homodimer. Heterodimer of an alpha (TPM1, TPM3 or TPM4) and a beta (TPM2) chain.</text>
</comment>
<comment type="subcellular location">
    <subcellularLocation>
        <location evidence="4">Cytoplasm</location>
        <location evidence="4">Cytoskeleton</location>
    </subcellularLocation>
    <text evidence="4">Associates with F-actin stress fibers.</text>
</comment>
<comment type="alternative products">
    <event type="alternative splicing"/>
    <isoform>
        <id>P58774-1</id>
        <name>1</name>
        <name>Skeletal muscle</name>
        <name>TB1-3</name>
        <sequence type="displayed"/>
    </isoform>
    <isoform>
        <id>P58774-2</id>
        <name>2</name>
        <name>non-muscle</name>
        <name>Fibroblast</name>
        <name>TM-1</name>
        <sequence type="described" ref="VSP_006597 VSP_006598"/>
    </isoform>
</comment>
<comment type="domain">
    <text>The molecule is in a coiled coil structure that is formed by 2 polypeptide chains. The sequence exhibits a prominent seven-residues periodicity.</text>
</comment>
<comment type="PTM">
    <text evidence="7">Phosphorylated on Ser-61 by PIK3CG. Phosphorylation on Ser-61 is required for ADRB2 internalization.</text>
</comment>
<comment type="similarity">
    <text evidence="9">Belongs to the tropomyosin family.</text>
</comment>
<sequence length="284" mass="32837">MDAIKKKMQMLKLDKENAIDRAEQAEADKKQAEDRCKQLEEEQQALQKKLKGTEDEVEKYSESVKDAQEKLEQAEKKATDAEADVASLNRRIQLVEEELDRAQERLATALQKLEEAEKAADESERGMKVIENRAMKDEEKMELQEMQLKEAKHIAEDSDRKYEEVARKLVILEGELERSEERAEVAESKCGDLEEELKIVTNNLKSLEAQADKYSTKEDKYEEEIKLLEEKLKEAETRAEFAERSVAKLEKTIDDLEDEVYAQKMKYKAISEELDNALNDITSL</sequence>
<name>TPM2_MOUSE</name>
<keyword id="KW-0007">Acetylation</keyword>
<keyword id="KW-0009">Actin-binding</keyword>
<keyword id="KW-0025">Alternative splicing</keyword>
<keyword id="KW-0175">Coiled coil</keyword>
<keyword id="KW-0963">Cytoplasm</keyword>
<keyword id="KW-0206">Cytoskeleton</keyword>
<keyword id="KW-0514">Muscle protein</keyword>
<keyword id="KW-0597">Phosphoprotein</keyword>
<keyword id="KW-1185">Reference proteome</keyword>
<reference key="1">
    <citation type="journal article" date="1988" name="Biochim. Biophys. Acta">
        <title>The tropomyosin mRNAs of mouse striated muscles: molecular cloning of beta-tropomyosin.</title>
        <authorList>
            <person name="McInnes C."/>
            <person name="Leader D.P."/>
        </authorList>
    </citation>
    <scope>NUCLEOTIDE SEQUENCE [MRNA] (ISOFORM 1)</scope>
</reference>
<reference key="2">
    <citation type="journal article" date="1992" name="J. Biol. Chem.">
        <title>Choice of 3' cleavage/polyadenylation site in beta-tropomyosin RNA processing is differentiation-dependent in mouse BC3H1 muscle cells.</title>
        <authorList>
            <person name="Wang Y.C."/>
            <person name="Rubenstein P.A."/>
        </authorList>
    </citation>
    <scope>NUCLEOTIDE SEQUENCE [MRNA] (ISOFORMS 1 AND 2)</scope>
    <source>
        <strain>C3H/HeJ</strain>
    </source>
</reference>
<reference key="3">
    <citation type="journal article" date="2005" name="Nat. Cell Biol.">
        <title>Protein kinase activity of phosphoinositide 3-kinase regulates beta-adrenergic receptor endocytosis.</title>
        <authorList>
            <person name="Naga Prasad S.V."/>
            <person name="Jayatilleke A."/>
            <person name="Madamanchi A."/>
            <person name="Rockman H.A."/>
        </authorList>
    </citation>
    <scope>FUNCTION</scope>
    <scope>PHOSPHORYLATION AT SER-61</scope>
    <scope>MUTAGENESIS OF SER-61</scope>
</reference>
<reference key="4">
    <citation type="journal article" date="2010" name="Cell">
        <title>A tissue-specific atlas of mouse protein phosphorylation and expression.</title>
        <authorList>
            <person name="Huttlin E.L."/>
            <person name="Jedrychowski M.P."/>
            <person name="Elias J.E."/>
            <person name="Goswami T."/>
            <person name="Rad R."/>
            <person name="Beausoleil S.A."/>
            <person name="Villen J."/>
            <person name="Haas W."/>
            <person name="Sowa M.E."/>
            <person name="Gygi S.P."/>
        </authorList>
    </citation>
    <scope>PHOSPHORYLATION [LARGE SCALE ANALYSIS] AT SER-283</scope>
    <scope>IDENTIFICATION BY MASS SPECTROMETRY [LARGE SCALE ANALYSIS]</scope>
    <source>
        <tissue>Brain</tissue>
        <tissue>Brown adipose tissue</tissue>
        <tissue>Kidney</tissue>
        <tissue>Lung</tissue>
        <tissue>Pancreas</tissue>
        <tissue>Spleen</tissue>
        <tissue>Testis</tissue>
    </source>
</reference>
<accession>P58774</accession>
<accession>P02560</accession>
<accession>P46901</accession>
<proteinExistence type="evidence at protein level"/>